<evidence type="ECO:0000256" key="1">
    <source>
        <dbReference type="SAM" id="MobiDB-lite"/>
    </source>
</evidence>
<evidence type="ECO:0000269" key="2">
    <source>
    </source>
</evidence>
<evidence type="ECO:0000269" key="3">
    <source>
    </source>
</evidence>
<evidence type="ECO:0000269" key="4">
    <source>
    </source>
</evidence>
<evidence type="ECO:0000269" key="5">
    <source>
    </source>
</evidence>
<evidence type="ECO:0000269" key="6">
    <source>
    </source>
</evidence>
<evidence type="ECO:0000269" key="7">
    <source>
    </source>
</evidence>
<evidence type="ECO:0000305" key="8"/>
<name>HOPM1_PSESM</name>
<proteinExistence type="evidence at protein level"/>
<reference key="1">
    <citation type="journal article" date="2000" name="Proc. Natl. Acad. Sci. U.S.A.">
        <title>The Pseudomonas syringae Hrp pathogenicity island has a tripartite mosaic structure composed of a cluster of type III secretion genes bounded by exchangeable effector and conserved effector loci that contribute to parasitic fitness and pathogenicity in plants.</title>
        <authorList>
            <person name="Alfano J.R."/>
            <person name="Charkowski A.O."/>
            <person name="Deng W.-L."/>
            <person name="Badel J.L."/>
            <person name="Petnicki-Ocwieja T."/>
            <person name="van Dijk K."/>
            <person name="Collmer A."/>
        </authorList>
    </citation>
    <scope>NUCLEOTIDE SEQUENCE [GENOMIC DNA]</scope>
    <source>
        <strain>ATCC BAA-871 / DC3000</strain>
    </source>
</reference>
<reference key="2">
    <citation type="journal article" date="2003" name="Proc. Natl. Acad. Sci. U.S.A.">
        <title>The complete genome sequence of the Arabidopsis and tomato pathogen Pseudomonas syringae pv. tomato DC3000.</title>
        <authorList>
            <person name="Buell C.R."/>
            <person name="Joardar V."/>
            <person name="Lindeberg M."/>
            <person name="Selengut J."/>
            <person name="Paulsen I.T."/>
            <person name="Gwinn M.L."/>
            <person name="Dodson R.J."/>
            <person name="DeBoy R.T."/>
            <person name="Durkin A.S."/>
            <person name="Kolonay J.F."/>
            <person name="Madupu R."/>
            <person name="Daugherty S.C."/>
            <person name="Brinkac L.M."/>
            <person name="Beanan M.J."/>
            <person name="Haft D.H."/>
            <person name="Nelson W.C."/>
            <person name="Davidsen T.M."/>
            <person name="Zafar N."/>
            <person name="Zhou L."/>
            <person name="Liu J."/>
            <person name="Yuan Q."/>
            <person name="Khouri H.M."/>
            <person name="Fedorova N.B."/>
            <person name="Tran B."/>
            <person name="Russell D."/>
            <person name="Berry K.J."/>
            <person name="Utterback T.R."/>
            <person name="Van Aken S.E."/>
            <person name="Feldblyum T.V."/>
            <person name="D'Ascenzo M."/>
            <person name="Deng W.-L."/>
            <person name="Ramos A.R."/>
            <person name="Alfano J.R."/>
            <person name="Cartinhour S."/>
            <person name="Chatterjee A.K."/>
            <person name="Delaney T.P."/>
            <person name="Lazarowitz S.G."/>
            <person name="Martin G.B."/>
            <person name="Schneider D.J."/>
            <person name="Tang X."/>
            <person name="Bender C.L."/>
            <person name="White O."/>
            <person name="Fraser C.M."/>
            <person name="Collmer A."/>
        </authorList>
    </citation>
    <scope>NUCLEOTIDE SEQUENCE [LARGE SCALE GENOMIC DNA]</scope>
    <source>
        <strain>ATCC BAA-871 / DC3000</strain>
    </source>
</reference>
<reference key="3">
    <citation type="journal article" date="2002" name="Mol. Microbiol.">
        <title>Identification of Pseudomonas syringae pv. tomato genes induced during infection of Arabidopsis thaliana.</title>
        <authorList>
            <person name="Boch J."/>
            <person name="Joardar V."/>
            <person name="Gao L."/>
            <person name="Robertson T.L."/>
            <person name="Lim M."/>
            <person name="Kunkel B.N."/>
        </authorList>
    </citation>
    <scope>INDUCTION</scope>
    <source>
        <strain>ATCC BAA-871 / DC3000</strain>
    </source>
</reference>
<reference key="4">
    <citation type="journal article" date="2003" name="Mol. Microbiol.">
        <title>Pseudomonas syringae pv. tomato DC3000 HopPtoM (CEL ORF3) is important for lesion formation but not growth in tomato and is secreted and translocated by the Hrp type III secretion system in a chaperone-dependent manner.</title>
        <authorList>
            <person name="Badel J.L."/>
            <person name="Nomura K."/>
            <person name="Bandyopadhyay S."/>
            <person name="Shimizu R."/>
            <person name="Collmer A."/>
            <person name="He S.Y."/>
        </authorList>
    </citation>
    <scope>FUNCTION</scope>
    <scope>INDUCTION</scope>
    <scope>INTERACTION WITH SHCM</scope>
    <scope>SUBCELLULAR LOCATION</scope>
    <source>
        <strain>ATCC BAA-871 / DC3000</strain>
    </source>
</reference>
<reference key="5">
    <citation type="journal article" date="2004" name="Proc. Natl. Acad. Sci. U.S.A.">
        <title>A family of conserved bacterial effectors inhibits salicylic acid-mediated basal immunity and promotes disease necrosis in plants.</title>
        <authorList>
            <person name="DebRoy S."/>
            <person name="Thilmony R."/>
            <person name="Kwack Y.-B."/>
            <person name="Nomura K."/>
            <person name="He S.Y."/>
        </authorList>
    </citation>
    <scope>FUNCTION</scope>
    <source>
        <strain>ATCC BAA-871 / DC3000</strain>
    </source>
</reference>
<reference key="6">
    <citation type="journal article" date="2005" name="Plant J.">
        <title>Basal resistance against bacteria in Nicotiana benthamiana leaves is accompanied by reduced vascular staining and suppressed by multiple Pseudomonas syringae type III secretion system effector proteins.</title>
        <authorList>
            <person name="Oh H.-S."/>
            <person name="Collmer A."/>
        </authorList>
    </citation>
    <scope>FUNCTION</scope>
    <source>
        <strain>ATCC BAA-871 / DC3000</strain>
    </source>
</reference>
<reference key="7">
    <citation type="journal article" date="2006" name="Mol. Plant Microbe Interact.">
        <title>A Pseudomonas syringae pv. tomato avrE1/hopM1 mutant is severely reduced in growth and lesion formation in tomato.</title>
        <authorList>
            <person name="Badel J.L."/>
            <person name="Shimizu R."/>
            <person name="Oh H.-S."/>
            <person name="Collmer A."/>
        </authorList>
    </citation>
    <scope>FUNCTION</scope>
    <source>
        <strain>ATCC BAA-871 / DC3000</strain>
    </source>
</reference>
<reference key="8">
    <citation type="journal article" date="2006" name="Science">
        <title>A bacterial virulence protein suppresses host innate immunity to cause plant disease.</title>
        <authorList>
            <person name="Nomura K."/>
            <person name="DebRoy S."/>
            <person name="Lee Y.H."/>
            <person name="Pumplin N."/>
            <person name="Jones J."/>
            <person name="He S.Y."/>
        </authorList>
    </citation>
    <scope>FUNCTION</scope>
    <scope>SUBCELLULAR LOCATION</scope>
    <scope>INTERACTION WITH BIG5/ATMIN7</scope>
    <source>
        <strain>ATCC BAA-871 / DC3000</strain>
    </source>
</reference>
<sequence length="712" mass="75214">MISSRIGGAGGVELSRVNQQHDTVPAQTAHPNAVTAGMNPPLTPDQSGSHATESSSAGAARLNVAARHTQLLQAFKAEHGTAPVSGAPMISSRAALLIGSLLQAEPLPFEVMAEKLSPERYQLKQFQGSDLQQRLEKFAQPGQIPDKAEVGQLIKGFAQSVADQLEHFQLMHDASPATVGQHAKADKATLAVSQTALGEYAGRASKAIGEGLSNSIASLDEHISALDLTLQDAEQGNKESLHADRQALVDAKTTLVGLHADFVKSPEAKRLASVAAHTQLDNVVSDLVTARNTVGGWKGAGPIVAAAVPQFLSSMTHLGYVRLSTSDKLRDTIPETSSDANMLKASIIGMVAGIAHETVNSVVKPMFQAALQKTGLNERLNMVPMKAVDTNTVIPDPFELKSEHGELVKKTPEEVAQDKAFVKSERALLNQKKVQGSSTHPVGELMAYSAFGGSQAVRQMLNDVHQINGQTLSARALASGFGGAVSASSQTLLQLKSNYVDPQGRKIPVFTPDRAESDLKKDLLKGMDLREPSVRTTFYSKALSGIQSSALTSALPPVTAQAEGASGTLSAGAILRNMALAATGSVSYLSTLYTNQSVTAEAKALKAAGMGGATPMLDRTETALNNIRHPNRESLPHTFQKSTLSGIPRVAENAYHMGRGALQLPTQMAVDTVRVVDEGVLNAVASAREALKQPTKDDDALRALEEGLLDPR</sequence>
<feature type="chain" id="PRO_0000260212" description="Effector protein HopM1">
    <location>
        <begin position="1"/>
        <end position="712"/>
    </location>
</feature>
<feature type="region of interest" description="Disordered" evidence="1">
    <location>
        <begin position="22"/>
        <end position="58"/>
    </location>
</feature>
<feature type="compositionally biased region" description="Polar residues" evidence="1">
    <location>
        <begin position="44"/>
        <end position="57"/>
    </location>
</feature>
<feature type="sequence conflict" description="In Ref. 1; AAF71501." evidence="8" ref="1">
    <original>E</original>
    <variation>K</variation>
    <location>
        <position position="13"/>
    </location>
</feature>
<organism>
    <name type="scientific">Pseudomonas syringae pv. tomato (strain ATCC BAA-871 / DC3000)</name>
    <dbReference type="NCBI Taxonomy" id="223283"/>
    <lineage>
        <taxon>Bacteria</taxon>
        <taxon>Pseudomonadati</taxon>
        <taxon>Pseudomonadota</taxon>
        <taxon>Gammaproteobacteria</taxon>
        <taxon>Pseudomonadales</taxon>
        <taxon>Pseudomonadaceae</taxon>
        <taxon>Pseudomonas</taxon>
    </lineage>
</organism>
<accession>Q887D0</accession>
<accession>Q9JP36</accession>
<protein>
    <recommendedName>
        <fullName>Effector protein HopM1</fullName>
    </recommendedName>
    <alternativeName>
        <fullName>Hrp outer protein M1</fullName>
    </alternativeName>
    <alternativeName>
        <fullName>Type III effector HopPtoM</fullName>
    </alternativeName>
</protein>
<keyword id="KW-1043">Host membrane</keyword>
<keyword id="KW-0472">Membrane</keyword>
<keyword id="KW-1185">Reference proteome</keyword>
<keyword id="KW-0964">Secreted</keyword>
<keyword id="KW-0843">Virulence</keyword>
<dbReference type="EMBL" id="AF232004">
    <property type="protein sequence ID" value="AAF71501.1"/>
    <property type="status" value="ALT_FRAME"/>
    <property type="molecule type" value="Genomic_DNA"/>
</dbReference>
<dbReference type="EMBL" id="AE016853">
    <property type="protein sequence ID" value="AAO54897.1"/>
    <property type="molecule type" value="Genomic_DNA"/>
</dbReference>
<dbReference type="RefSeq" id="NP_791202.1">
    <property type="nucleotide sequence ID" value="NC_004578.1"/>
</dbReference>
<dbReference type="RefSeq" id="WP_005763919.1">
    <property type="nucleotide sequence ID" value="NC_004578.1"/>
</dbReference>
<dbReference type="IntAct" id="Q887D0">
    <property type="interactions" value="8"/>
</dbReference>
<dbReference type="STRING" id="223283.PSPTO_1375"/>
<dbReference type="GeneID" id="1183011"/>
<dbReference type="KEGG" id="pst:PSPTO_1375"/>
<dbReference type="PATRIC" id="fig|223283.9.peg.1397"/>
<dbReference type="eggNOG" id="ENOG5031JIP">
    <property type="taxonomic scope" value="Bacteria"/>
</dbReference>
<dbReference type="HOGENOM" id="CLU_023400_0_0_6"/>
<dbReference type="OrthoDB" id="7005093at2"/>
<dbReference type="PHI-base" id="PHI:123230"/>
<dbReference type="PHI-base" id="PHI:4008"/>
<dbReference type="PHI-base" id="PHI:6378"/>
<dbReference type="PHI-base" id="PHI:982"/>
<dbReference type="Proteomes" id="UP000002515">
    <property type="component" value="Chromosome"/>
</dbReference>
<dbReference type="GO" id="GO:0005576">
    <property type="term" value="C:extracellular region"/>
    <property type="evidence" value="ECO:0007669"/>
    <property type="project" value="UniProtKB-SubCell"/>
</dbReference>
<dbReference type="GO" id="GO:0033644">
    <property type="term" value="C:host cell membrane"/>
    <property type="evidence" value="ECO:0007669"/>
    <property type="project" value="UniProtKB-SubCell"/>
</dbReference>
<dbReference type="GO" id="GO:0016020">
    <property type="term" value="C:membrane"/>
    <property type="evidence" value="ECO:0007669"/>
    <property type="project" value="UniProtKB-KW"/>
</dbReference>
<gene>
    <name type="primary">hopM1</name>
    <name type="synonym">holPtoX</name>
    <name type="synonym">hopPtoM</name>
    <name type="ordered locus">PSPTO_1375</name>
    <name type="ORF">CEL ORF3</name>
</gene>
<comment type="function">
    <text evidence="3 4 5 6 7">Involved in the suppression of basal resistance and promotion of disease symptoms in plants. Mediates the ubiquitination and degradation, via the host proteasome, of a low-abundance immunity-associated protein in Arabidopsis thaliana. May be involved in the inhibition of a host vesicle trafficking pathway.</text>
</comment>
<comment type="subunit">
    <text evidence="3 7">Interacts with the chaperone ShcM. Interacts with host plant BIG5/ATMIN7.</text>
</comment>
<comment type="interaction">
    <interactant intactId="EBI-6394949">
        <id>Q887D0</id>
    </interactant>
    <interactant intactId="EBI-6395043">
        <id>F4IXW2</id>
        <label>BIG5</label>
    </interactant>
    <organismsDiffer>true</organismsDiffer>
    <experiments>3</experiments>
</comment>
<comment type="subcellular location">
    <subcellularLocation>
        <location>Secreted</location>
    </subcellularLocation>
    <subcellularLocation>
        <location>Host membrane</location>
    </subcellularLocation>
    <text>Secreted via the type III secretion system (T3SS). Localized to the plant endomembrane.</text>
</comment>
<comment type="induction">
    <text evidence="2 3">Transcriptionally induced by HrpL.</text>
</comment>
<comment type="sequence caution" evidence="8">
    <conflict type="frameshift">
        <sequence resource="EMBL-CDS" id="AAF71501"/>
    </conflict>
</comment>